<keyword id="KW-0002">3D-structure</keyword>
<keyword id="KW-1003">Cell membrane</keyword>
<keyword id="KW-0175">Coiled coil</keyword>
<keyword id="KW-0963">Cytoplasm</keyword>
<keyword id="KW-0217">Developmental protein</keyword>
<keyword id="KW-0449">Lipoprotein</keyword>
<keyword id="KW-0472">Membrane</keyword>
<keyword id="KW-0496">Mitochondrion</keyword>
<keyword id="KW-1210">Necrosis</keyword>
<keyword id="KW-0564">Palmitate</keyword>
<keyword id="KW-1185">Reference proteome</keyword>
<keyword id="KW-0812">Transmembrane</keyword>
<keyword id="KW-1134">Transmembrane beta strand</keyword>
<comment type="function">
    <molecule>Gasdermin-A3</molecule>
    <text evidence="3 5 12 13 20">Precursor of a pore-forming protein involved in the transition from catagen to telogen at the end of hair follicle morphogenesis (PubMed:15475261, PubMed:26375003, PubMed:27281216). This form constitutes the precursor of the pore: upon cleavage, the released N-terminal moiety (Gasdermin-A3, N-terminal) binds to membranes and forms pores, triggering pyroptosis (PubMed:26375003, PubMed:27281216, PubMed:35545613). This form acts as a sensor of infection: activation is triggered by cleavage by some bacterial effector protein, which releases the N-terminal moiety (Gasdermin-A3, N-terminal) (By similarity).</text>
</comment>
<comment type="function">
    <molecule>Gasdermin-A3, N-terminal</molecule>
    <text evidence="3 5 6 7 8 12 13 14 15 17 18 20">Pore-forming protein that causes membrane permeabilization and pyroptosis (PubMed:26375003, PubMed:27281216, PubMed:35545613). Released upon cleavage by some bacterial effector protein, and binds to membrane inner leaflet lipids (By similarity). Homooligomerizes within the membrane and forms pores of 10-15 nanometers (nm) of inner diameter, allowing the release of mature interleukin-1 (IL1B and IL18) and triggering pyroptosis (PubMed:27281216, PubMed:33883744, PubMed:35545613). Binds to membrane inner leaflet lipids, including bisphosphorylated phosphatidylinositols, such as phosphatidylinositol (4,5)-bisphosphate, as well as phosphatidylinositol (3,4,5)-bisphosphate, and more weakly to monophosphorylated phosphatidylinositols (PubMed:27281216). Also binds to bacterial and mitochondrial lipids, including cardiolipin, and exhibits bactericidal activity (PubMed:27281216, PubMed:29695864). Plays a role in the transition from catagen to telogen at the end of hair follicle morphogenesis, possibly by regulating hair follicle stem cell niche maintenance (PubMed:15475261, PubMed:15737203, PubMed:17572385, PubMed:22155111, PubMed:32302611). Also required for mammary gland development (PubMed:28168650).</text>
</comment>
<comment type="activity regulation">
    <molecule>Gasdermin-A3</molecule>
    <text evidence="10 11 12">The full-length protein before cleavage is inactive: intramolecular interactions between N- and C-terminal domains mediate autoinhibition in the absence of activation signal (PubMed:25825937, PubMed:26100518, PubMed:26375003). The intrinsic pyroptosis-inducing activity is carried by the released N-terminal moiety (Gasdermin-A3, N-terminal) (PubMed:26100518, PubMed:26375003).</text>
</comment>
<comment type="subunit">
    <molecule>Gasdermin-A3, N-terminal</molecule>
    <text evidence="13 15 20">Homooligomer; homooligomeric ring-shaped pore complex containing 18-36 subunits when inserted in the membrane.</text>
</comment>
<comment type="subcellular location">
    <molecule>Gasdermin-A3</molecule>
    <subcellularLocation>
        <location evidence="13">Cytoplasm</location>
        <location evidence="13">Cytosol</location>
    </subcellularLocation>
</comment>
<comment type="subcellular location">
    <molecule>Gasdermin-A3, N-terminal</molecule>
    <subcellularLocation>
        <location evidence="13">Cell membrane</location>
        <topology evidence="15">Multi-pass membrane protein</topology>
    </subcellularLocation>
    <subcellularLocation>
        <location evidence="25">Mitochondrion membrane</location>
        <topology evidence="15">Multi-pass membrane protein</topology>
    </subcellularLocation>
</comment>
<comment type="tissue specificity">
    <text evidence="5">Highest levels in skin with weak expression in placenta and testis. Not detected in the gastrointestinal tract. In skin, expressed in postnatal hair follicles and epidermis as well as sebaceous gland basal cells.</text>
</comment>
<comment type="developmental stage">
    <text evidence="5">Not detected at postnatal day 1. Expressed on subsequent postnatal days up to day 20 and throughout adulthood.</text>
</comment>
<comment type="domain">
    <text evidence="12">Intramolecular interactions between N- and C-terminal domains are important for autoinhibition in the absence of activation signal (PubMed:26375003). The intrinsic pyroptosis-inducing activity is carried by the N-terminal domain (PubMed:26375003).</text>
</comment>
<comment type="domain">
    <molecule>Gasdermin-A3, N-terminal</molecule>
    <text evidence="18">Forms a ring-shaped pore complex containing 27-28 subunits that inserts into the membrane (PubMed:33883744). The pore conduit is predominantly negatively charged, facilitating the release of mature interleukin-1 (IL1B and IL18). In contrast interleukin-1 precursors are not released, due to the presence of an acidic region that is proteolytically removed by CASP1 during maturation (PubMed:33883744).</text>
</comment>
<comment type="PTM">
    <text evidence="1 19">Cleavage relieves autoinhibition by releasing the N-terminal moiety (Gasdermin-A3, N-terminal) that initiates pyroptosis (By similarity). In contrast to Gsdma, not cleaved by bacterial effector protein SpeB (PubMed:35110732).</text>
</comment>
<comment type="PTM">
    <text evidence="2">Palmitoylated.</text>
</comment>
<comment type="disruption phenotype">
    <text evidence="5 6 7 8 10 21">No visible phenotype (PubMed:25825937). A number of gain-of-function mutations, such as alopecia and excoriation (AE), bareskin (Bsk), defolliculated (Dfl), finnegan (Fgn) reduced coat 2 (Rco2), Rex-denuded (Re-den) and recombination induced mutation 3 (Rim3), have been identified: they cause progressive hair loss (alopecia) accompanied with hyperkeratosis and chronic skin inflammation (PubMed:15475261, PubMed:15737203, PubMed:17572385, PubMed:22155111). Gain-of-function mutations cause bulge stem cell depletion, leading to skin inflammation and alopecia (PubMed:22155111). Mice lacking Gsdma, Gsdma2 and Gsdma3 are highly susceptible to subcutaneous group A Streptococcus (GAS) infection in an animal model (PubMed:35545676).</text>
</comment>
<comment type="biotechnology">
    <text evidence="16">Pyroptosis-induced inflammation mediated by Gsdma3 triggers robust anti-tumor immunity and may be used in therapies to suppress tumor growth (PubMed:32188939). Use of a nanoparticle-mediated delivery system that selectively directs release of N-terminal moiety (Gasdermin-A3, N-terminal) into tumor cells, triggers pyroptosis and robust anti-tumor immunity (PubMed:32188939). Pyroptosis of less than 15% of tumor cells is sufficient to clear the entire tumor in a mammary tumor graft (PubMed:32188939).</text>
</comment>
<comment type="similarity">
    <text evidence="24">Belongs to the gasdermin family.</text>
</comment>
<comment type="sequence caution" evidence="24">
    <conflict type="erroneous gene model prediction">
        <sequence resource="EMBL-CDS" id="CAM24379"/>
    </conflict>
</comment>
<reference key="1">
    <citation type="journal article" date="2004" name="Genomics">
        <title>The dominant alopecia phenotypes Bareskin, Rex-denuded, and Reduced Coat 2 are caused by mutations in gasdermin 3.</title>
        <authorList>
            <person name="Runkel F."/>
            <person name="Marquardt A."/>
            <person name="Stoeger C."/>
            <person name="Kochmann E."/>
            <person name="Simon D."/>
            <person name="Kohnke B."/>
            <person name="Korthaus D."/>
            <person name="Wattler F."/>
            <person name="Fuchs H."/>
            <person name="Hrabe de Angelis M."/>
            <person name="Stumm G."/>
            <person name="Nehls M."/>
            <person name="Wattler S."/>
            <person name="Franz T."/>
            <person name="Augustin M."/>
        </authorList>
    </citation>
    <scope>NUCLEOTIDE SEQUENCE [MRNA]</scope>
    <scope>FUNCTION</scope>
    <scope>TISSUE SPECIFICITY</scope>
    <scope>DEVELOPMENTAL STAGE</scope>
    <scope>DISRUPTION PHENOTYPE</scope>
    <scope>MUTAGENESIS OF LEU-343; TYR-344 AND ALA-412</scope>
    <source>
        <strain evidence="27">C57BL/6J</strain>
        <tissue evidence="27">Skin</tissue>
    </source>
</reference>
<reference key="2">
    <citation type="journal article" date="2009" name="PLoS Biol.">
        <title>Lineage-specific biology revealed by a finished genome assembly of the mouse.</title>
        <authorList>
            <person name="Church D.M."/>
            <person name="Goodstadt L."/>
            <person name="Hillier L.W."/>
            <person name="Zody M.C."/>
            <person name="Goldstein S."/>
            <person name="She X."/>
            <person name="Bult C.J."/>
            <person name="Agarwala R."/>
            <person name="Cherry J.L."/>
            <person name="DiCuccio M."/>
            <person name="Hlavina W."/>
            <person name="Kapustin Y."/>
            <person name="Meric P."/>
            <person name="Maglott D."/>
            <person name="Birtle Z."/>
            <person name="Marques A.C."/>
            <person name="Graves T."/>
            <person name="Zhou S."/>
            <person name="Teague B."/>
            <person name="Potamousis K."/>
            <person name="Churas C."/>
            <person name="Place M."/>
            <person name="Herschleb J."/>
            <person name="Runnheim R."/>
            <person name="Forrest D."/>
            <person name="Amos-Landgraf J."/>
            <person name="Schwartz D.C."/>
            <person name="Cheng Z."/>
            <person name="Lindblad-Toh K."/>
            <person name="Eichler E.E."/>
            <person name="Ponting C.P."/>
        </authorList>
    </citation>
    <scope>NUCLEOTIDE SEQUENCE [LARGE SCALE GENOMIC DNA]</scope>
    <source>
        <strain>C57BL/6J</strain>
    </source>
</reference>
<reference key="3">
    <citation type="journal article" date="2007" name="Genomics">
        <title>Members of a novel gene family, Gsdm, are expressed exclusively in the epithelium of the skin and gastrointestinal tract in a highly tissue-specific manner.</title>
        <authorList>
            <person name="Tamura M."/>
            <person name="Tanaka S."/>
            <person name="Fujii T."/>
            <person name="Aoki A."/>
            <person name="Komiyama H."/>
            <person name="Ezawa K."/>
            <person name="Sumiyama K."/>
            <person name="Sagai T."/>
            <person name="Shiroishi T."/>
        </authorList>
    </citation>
    <scope>IDENTIFICATION</scope>
</reference>
<reference key="4">
    <citation type="journal article" date="2005" name="J. Invest. Dermatol.">
        <title>Mutations in gasdermin 3 cause aberrant differentiation of the hair follicle and sebaceous gland.</title>
        <authorList>
            <person name="Lunny D.P."/>
            <person name="Weed E."/>
            <person name="Nolan P.M."/>
            <person name="Marquardt A."/>
            <person name="Augustin M."/>
            <person name="Porter R.M."/>
        </authorList>
    </citation>
    <scope>FUNCTION</scope>
    <scope>DISRUPTION PHENOTYPE</scope>
    <scope>MUTAGENESIS OF 262-GLU--SER-464 AND THR-278</scope>
</reference>
<reference key="5">
    <citation type="journal article" date="2007" name="Biochem. Biophys. Res. Commun.">
        <title>A new Gsdma3 mutation affecting anagen phase of first hair cycle.</title>
        <authorList>
            <person name="Tanaka S."/>
            <person name="Tamura M."/>
            <person name="Aoki A."/>
            <person name="Fujii T."/>
            <person name="Komiyama H."/>
            <person name="Sagai T."/>
            <person name="Shiroishi T."/>
        </authorList>
    </citation>
    <scope>FUNCTION</scope>
    <scope>DISRUPTION PHENOTYPE</scope>
    <scope>MUTAGENESIS OF ALA-348</scope>
</reference>
<reference key="6">
    <citation type="journal article" date="2012" name="Am. J. Pathol.">
        <title>Gsdma3 mutation causes bulge stem cell depletion and alopecia mediated by skin inflammation.</title>
        <authorList>
            <person name="Zhou Y."/>
            <person name="Jiang X."/>
            <person name="Gu P."/>
            <person name="Chen W."/>
            <person name="Zeng X."/>
            <person name="Gao X."/>
        </authorList>
    </citation>
    <scope>FUNCTION</scope>
    <scope>DISRUPTION PHENOTYPE</scope>
    <scope>MUTAGENESIS OF TYR-344</scope>
</reference>
<reference key="7">
    <citation type="journal article" date="2012" name="J. Dermatol. Sci.">
        <title>Gsdma3(I359N) is a novel ENU-induced mutant mouse line for studying the function of Gasdermin A3 in the hair follicle and epidermis.</title>
        <authorList>
            <person name="Kumar S."/>
            <person name="Rathkolb B."/>
            <person name="Budde B.S."/>
            <person name="Nuernberg P."/>
            <person name="de Angelis M.H."/>
            <person name="Aigner B."/>
            <person name="Schneider M.R."/>
        </authorList>
    </citation>
    <scope>MUTAGENESIS OF ILE-359</scope>
</reference>
<reference key="8">
    <citation type="journal article" date="2015" name="Biochem. J.">
        <title>Loss of conserved Gsdma3 self-regulation causes autophagy and cell death.</title>
        <authorList>
            <person name="Shi P."/>
            <person name="Tang A."/>
            <person name="Xian L."/>
            <person name="Hou S."/>
            <person name="Zou D."/>
            <person name="Lv Y."/>
            <person name="Huang Z."/>
            <person name="Wang Q."/>
            <person name="Song A."/>
            <person name="Lin Z."/>
            <person name="Gao X."/>
        </authorList>
    </citation>
    <scope>ACTIVITY REGULATION</scope>
    <scope>DISRUPTION PHENOTYPE</scope>
    <scope>MUTAGENESIS OF TYR-344</scope>
</reference>
<reference key="9">
    <citation type="journal article" date="2015" name="J. Biomed. Sci.">
        <title>N-terminal functional domain of Gasdermin A3 regulates mitochondrial homeostasis via mitochondrial targeting.</title>
        <authorList>
            <person name="Lin P.H."/>
            <person name="Lin H.Y."/>
            <person name="Kuo C.C."/>
            <person name="Yang L.T."/>
        </authorList>
    </citation>
    <scope>ACTIVITY REGULATION</scope>
    <scope>SUBCELLULAR LOCATION</scope>
</reference>
<reference key="10">
    <citation type="journal article" date="2015" name="Nature">
        <title>Cleavage of GSDMD by inflammatory caspases determines pyroptotic cell death.</title>
        <authorList>
            <person name="Shi J."/>
            <person name="Zhao Y."/>
            <person name="Wang K."/>
            <person name="Shi X."/>
            <person name="Wang Y."/>
            <person name="Huang H."/>
            <person name="Zhuang Y."/>
            <person name="Cai T."/>
            <person name="Wang F."/>
            <person name="Shao F."/>
        </authorList>
    </citation>
    <scope>FUNCTION</scope>
    <scope>ACTIVITY REGULATION</scope>
    <scope>MUTAGENESIS OF THR-278; LEU-343; TYR-344; ALA-348 AND ALA-412</scope>
</reference>
<reference key="11">
    <citation type="journal article" date="2017" name="Histochem. Cell Biol.">
        <title>Gsdma3 is required for mammary gland development in mice.</title>
        <authorList>
            <person name="Guo H."/>
            <person name="Xu S."/>
            <person name="Liu Y."/>
            <person name="Yang Y."/>
            <person name="Deng F."/>
            <person name="Xing Y."/>
            <person name="Lian X."/>
            <person name="Li Y."/>
        </authorList>
    </citation>
    <scope>FUNCTION</scope>
    <scope>MUTAGENESIS OF TYR-344</scope>
</reference>
<reference key="12">
    <citation type="journal article" date="2020" name="J. Invest. Dermatol.">
        <title>Gasdermin A3-mediated cell death causes niche collapse and precocious activation of hair follicle stem cells.</title>
        <authorList>
            <person name="Li S.T."/>
            <person name="Suen W.J."/>
            <person name="Kao C.H."/>
            <person name="Yang M.K."/>
            <person name="Yang L.T."/>
        </authorList>
    </citation>
    <scope>FUNCTION</scope>
</reference>
<reference key="13">
    <citation type="journal article" date="2020" name="Nature">
        <title>A bioorthogonal system reveals antitumour immune function of pyroptosis.</title>
        <authorList>
            <person name="Wang Q."/>
            <person name="Wang Y."/>
            <person name="Ding J."/>
            <person name="Wang C."/>
            <person name="Zhou X."/>
            <person name="Gao W."/>
            <person name="Huang H."/>
            <person name="Shao F."/>
            <person name="Liu Z."/>
        </authorList>
    </citation>
    <scope>BIOTECHNOLOGY</scope>
</reference>
<reference key="14">
    <citation type="journal article" date="2021" name="Nature">
        <title>Gasdermin D pore structure reveals preferential release of mature interleukin-1.</title>
        <authorList>
            <person name="Xia S."/>
            <person name="Zhang Z."/>
            <person name="Magupalli V.G."/>
            <person name="Pablo J.L."/>
            <person name="Dong Y."/>
            <person name="Vora S.M."/>
            <person name="Wang L."/>
            <person name="Fu T.M."/>
            <person name="Jacobson M.P."/>
            <person name="Greka A."/>
            <person name="Lieberman J."/>
            <person name="Ruan J."/>
            <person name="Wu H."/>
        </authorList>
    </citation>
    <scope>FUNCTION</scope>
    <scope>DOMAIN</scope>
    <scope>MUTAGENESIS OF 41-ARG--LYS-44; 47-LEU--TRP-49; 62-ASP--ASP-75 AND 86-ASP--GLU-94</scope>
</reference>
<reference key="15">
    <citation type="journal article" date="2022" name="Nature">
        <title>Streptococcal pyrogenic exotoxin B cleaves GSDMA and triggers pyroptosis.</title>
        <authorList>
            <person name="Deng W."/>
            <person name="Bai Y."/>
            <person name="Deng F."/>
            <person name="Pan Y."/>
            <person name="Mei S."/>
            <person name="Zheng Z."/>
            <person name="Min R."/>
            <person name="Wu Z."/>
            <person name="Li W."/>
            <person name="Miao R."/>
            <person name="Zhang Z."/>
            <person name="Kupper T.S."/>
            <person name="Lieberman J."/>
            <person name="Liu X."/>
        </authorList>
    </citation>
    <scope>LACK OF PROTEOLYTIC CLEAVAGE BY SPEB</scope>
</reference>
<reference key="16">
    <citation type="journal article" date="2022" name="Nature">
        <title>Group A Streptococcus induces GSDMA-dependent pyroptosis in keratinocytes.</title>
        <authorList>
            <person name="LaRock D.L."/>
            <person name="Johnson A.F."/>
            <person name="Wilde S."/>
            <person name="Sands J.S."/>
            <person name="Monteiro M.P."/>
            <person name="LaRock C.N."/>
        </authorList>
    </citation>
    <scope>DISRUPTION PHENOTYPE</scope>
</reference>
<reference key="17">
    <citation type="journal article" date="2022" name="Nat. Commun.">
        <title>Gasdermin-A3 pore formation propagates along variable pathways.</title>
        <authorList>
            <person name="Mari S.A."/>
            <person name="Pluhackova K."/>
            <person name="Pipercevic J."/>
            <person name="Leipner M."/>
            <person name="Hiller S."/>
            <person name="Engel A."/>
            <person name="Mueller D.J."/>
        </authorList>
    </citation>
    <scope>FUNCTION</scope>
    <scope>SUBCELLULAR LOCATION</scope>
    <scope>SUBUNIT</scope>
</reference>
<reference key="18">
    <citation type="journal article" date="2016" name="Nature">
        <title>Pore-forming activity and structural autoinhibition of the gasdermin family.</title>
        <authorList>
            <person name="Ding J."/>
            <person name="Wang K."/>
            <person name="Liu W."/>
            <person name="She Y."/>
            <person name="Sun Q."/>
            <person name="Shi J."/>
            <person name="Sun H."/>
            <person name="Wang D.C."/>
            <person name="Shao F."/>
        </authorList>
    </citation>
    <scope>X-RAY CRYSTALLOGRAPHY (1.90 ANGSTROMS)</scope>
    <scope>FUNCTION</scope>
    <scope>LIPID-BINDING</scope>
    <scope>SUBCELLULAR LOCATION</scope>
    <scope>MUTAGENESIS OF GLU-14; LEU-184; LEU-270; TYR-344 AND ALA-348</scope>
</reference>
<reference evidence="29" key="19">
    <citation type="journal article" date="2018" name="Nature">
        <title>Cryo-EM structure of the gasdermin A3 membrane pore.</title>
        <authorList>
            <person name="Ruan J."/>
            <person name="Xia S."/>
            <person name="Liu X."/>
            <person name="Lieberman J."/>
            <person name="Wu H."/>
        </authorList>
    </citation>
    <scope>STRUCTURE BY ELECTRON MICROSCOPY (3.80 ANGSTROMS) OF 1-262 IN COMPLEX WITH CARDIOLIPIN</scope>
    <scope>FUNCTION</scope>
    <scope>SUBUNIT</scope>
    <scope>MUTAGENESIS OF 9-ARG--ARG-18; ARG-132; ARG-145 AND LEU-186</scope>
</reference>
<accession>Q5Y4Y6</accession>
<accession>A2A4X5</accession>
<feature type="chain" id="PRO_0000347272" description="Gasdermin-A3">
    <location>
        <begin position="1"/>
        <end position="464"/>
    </location>
</feature>
<feature type="chain" id="PRO_0000451670" description="Gasdermin-A3, N-terminal" evidence="26">
    <location>
        <begin position="1"/>
        <end position="262" status="uncertain"/>
    </location>
</feature>
<feature type="chain" id="PRO_0000451671" description="Gasdermin-A3, C-terminal" evidence="26">
    <location>
        <begin position="263" status="uncertain"/>
        <end position="464"/>
    </location>
</feature>
<feature type="transmembrane region" description="Beta stranded" evidence="26 29">
    <location>
        <begin position="78"/>
        <end position="95"/>
    </location>
</feature>
<feature type="transmembrane region" description="Beta stranded" evidence="26 29">
    <location>
        <begin position="99"/>
        <end position="120"/>
    </location>
</feature>
<feature type="transmembrane region" description="Beta stranded" evidence="26 29">
    <location>
        <begin position="164"/>
        <end position="180"/>
    </location>
</feature>
<feature type="transmembrane region" description="Beta stranded" evidence="26 29">
    <location>
        <begin position="184"/>
        <end position="198"/>
    </location>
</feature>
<feature type="region of interest" description="Triggers pyroptosis" evidence="13">
    <location>
        <begin position="1"/>
        <end position="261"/>
    </location>
</feature>
<feature type="coiled-coil region" evidence="4">
    <location>
        <begin position="255"/>
        <end position="327"/>
    </location>
</feature>
<feature type="binding site" evidence="15">
    <location>
        <begin position="9"/>
        <end position="13"/>
    </location>
    <ligand>
        <name>a cardiolipin</name>
        <dbReference type="ChEBI" id="CHEBI:62237"/>
    </ligand>
</feature>
<feature type="mutagenesis site" description="Impaired pore-formation." evidence="15">
    <original>RALVRELNPR</original>
    <variation>AALVAELNPAA</variation>
    <location>
        <begin position="9"/>
        <end position="18"/>
    </location>
</feature>
<feature type="mutagenesis site" description="No spontaneous pyroptosis-inducing activity; when associated with D-184." evidence="13">
    <original>E</original>
    <variation>K</variation>
    <location>
        <position position="14"/>
    </location>
</feature>
<feature type="mutagenesis site" description="Abolished ability to form a pore." evidence="18">
    <original>RKRK</original>
    <variation>EEEE</variation>
    <location>
        <begin position="41"/>
        <end position="44"/>
    </location>
</feature>
<feature type="mutagenesis site" description="Abolished ability to form a pore." evidence="18">
    <original>LFW</original>
    <variation>EEE</variation>
    <location>
        <begin position="47"/>
        <end position="49"/>
    </location>
</feature>
<feature type="mutagenesis site" description="In AP1; promotes ability to release of interleukin-1 (IL1B and IL18) precursors." evidence="18">
    <original>DLLEPGSSPSDLTD</original>
    <variation>ALLAPGSSPSALTA</variation>
    <location>
        <begin position="62"/>
        <end position="75"/>
    </location>
</feature>
<feature type="mutagenesis site" description="In AP2; promotes ability to release of interleukin-1 (IL1B and IL18) precursors." evidence="18">
    <original>DVQVQGLVE</original>
    <variation>AVQVQGLVA</variation>
    <location>
        <begin position="86"/>
        <end position="94"/>
    </location>
</feature>
<feature type="mutagenesis site" description="Weak or no effect on ability to induce pyroptosis. Impaired ability to induce pyroptosis; when associated with A-145." evidence="15">
    <original>R</original>
    <variation>A</variation>
    <location>
        <position position="132"/>
    </location>
</feature>
<feature type="mutagenesis site" description="Impaired ability to induce pyroptosis; when associated with A-132." evidence="15">
    <original>R</original>
    <variation>A</variation>
    <location>
        <position position="145"/>
    </location>
</feature>
<feature type="mutagenesis site" description="Markedly decreased induction of pyroptosis and defects in liposome-binding. No spontaneous pyroptosis-inducing activity; when associated with K-14." evidence="13">
    <original>L</original>
    <variation>D</variation>
    <location>
        <position position="184"/>
    </location>
</feature>
<feature type="mutagenesis site" description="Impaired pore-formation." evidence="15">
    <original>L</original>
    <variation>E</variation>
    <location>
        <position position="186"/>
    </location>
</feature>
<feature type="mutagenesis site" description="In Dfl mutant; gain-of-function mutation; causes an alopecia phenotype." evidence="6">
    <location>
        <begin position="262"/>
        <end position="464"/>
    </location>
</feature>
<feature type="mutagenesis site" description="Spontaneous pyroptosis-inducing activity." evidence="13">
    <original>L</original>
    <variation>D</variation>
    <location>
        <position position="270"/>
    </location>
</feature>
<feature type="mutagenesis site" description="In Fgn mutant; gain-of-function mutation; causes an alopecia phenotype. Attenuates intramolecular interaction between the N- and C-terminal domains, hence may relieve autoinhibition; constitutively active in triggering pyroptosis." evidence="6 12">
    <original>T</original>
    <variation>P</variation>
    <location>
        <position position="278"/>
    </location>
</feature>
<feature type="mutagenesis site" description="In Rco2 mutant; gain-of-function mutation; causes an alopecia phenotype. Attenuates intramolecular interaction between the N- and C-terminal domains, hence may relieve autoinhibition; constitutively active in triggering pyroptosis." evidence="5 12">
    <original>L</original>
    <variation>P</variation>
    <location>
        <position position="343"/>
    </location>
</feature>
<feature type="mutagenesis site" description="In Bsk mutant; gain-of-function mutation; causes an alopecia phenotype. Attenuates intramolecular interaction between the N- and C-terminal domains, hence may relieve autoinhibition; constitutively active in triggering pyroptosis." evidence="5 12">
    <original>Y</original>
    <variation>C</variation>
    <location>
        <position position="344"/>
    </location>
</feature>
<feature type="mutagenesis site" description="Spontaneous pyroptosis-inducing activity." evidence="13">
    <original>Y</original>
    <variation>D</variation>
    <location>
        <position position="344"/>
    </location>
</feature>
<feature type="mutagenesis site" description="In AE mutant; gain-of-function mutation; causes an alopecia phenotype; constitutively active in triggering cell death. Mice also display hypoplastic mammary glands, impairing lactation function." evidence="8 10 14">
    <original>Y</original>
    <variation>H</variation>
    <location>
        <position position="344"/>
    </location>
</feature>
<feature type="mutagenesis site" description="Spontaneous pyroptosis-inducing activity." evidence="13">
    <original>A</original>
    <variation>D</variation>
    <location>
        <position position="348"/>
    </location>
</feature>
<feature type="mutagenesis site" description="In Rim3 mutant; gain-of-function mutation; causes an alopecia phenotype. Attenuates intramolecular interaction between the N- and C-terminal domains, hence may relieve autoinhibition; constitutively active in triggering pyroptosis." evidence="7 12">
    <original>A</original>
    <variation>T</variation>
    <location>
        <position position="348"/>
    </location>
</feature>
<feature type="mutagenesis site" description="Gain-of-function mutation; causes an alopecia phenotype." evidence="9">
    <original>I</original>
    <variation>T</variation>
    <location>
        <position position="359"/>
    </location>
</feature>
<feature type="mutagenesis site" description="In Re-den mutant; gain-of-function mutation; causes an alopecia phenotype. Attenuates intramolecular interaction between the N- and C-terminal domains, hence may relieve autoinhibition; constitutively active in triggering pyroptosis." evidence="5 12">
    <original>A</original>
    <variation>AEA</variation>
    <location>
        <position position="412"/>
    </location>
</feature>
<feature type="helix" evidence="30">
    <location>
        <begin position="2"/>
        <end position="15"/>
    </location>
</feature>
<feature type="helix" evidence="30">
    <location>
        <begin position="30"/>
        <end position="33"/>
    </location>
</feature>
<feature type="strand" evidence="30">
    <location>
        <begin position="37"/>
        <end position="41"/>
    </location>
</feature>
<feature type="strand" evidence="30">
    <location>
        <begin position="52"/>
        <end position="59"/>
    </location>
</feature>
<feature type="helix" evidence="30">
    <location>
        <begin position="61"/>
        <end position="63"/>
    </location>
</feature>
<feature type="helix" evidence="30">
    <location>
        <begin position="82"/>
        <end position="84"/>
    </location>
</feature>
<feature type="strand" evidence="30">
    <location>
        <begin position="85"/>
        <end position="94"/>
    </location>
</feature>
<feature type="strand" evidence="30">
    <location>
        <begin position="99"/>
        <end position="105"/>
    </location>
</feature>
<feature type="strand" evidence="30">
    <location>
        <begin position="110"/>
        <end position="120"/>
    </location>
</feature>
<feature type="helix" evidence="30">
    <location>
        <begin position="122"/>
        <end position="131"/>
    </location>
</feature>
<feature type="helix" evidence="30">
    <location>
        <begin position="139"/>
        <end position="147"/>
    </location>
</feature>
<feature type="strand" evidence="30">
    <location>
        <begin position="152"/>
        <end position="162"/>
    </location>
</feature>
<feature type="strand" evidence="30">
    <location>
        <begin position="164"/>
        <end position="168"/>
    </location>
</feature>
<feature type="helix" evidence="30">
    <location>
        <begin position="180"/>
        <end position="184"/>
    </location>
</feature>
<feature type="strand" evidence="30">
    <location>
        <begin position="195"/>
        <end position="198"/>
    </location>
</feature>
<feature type="strand" evidence="30">
    <location>
        <begin position="203"/>
        <end position="210"/>
    </location>
</feature>
<feature type="helix" evidence="30">
    <location>
        <begin position="215"/>
        <end position="217"/>
    </location>
</feature>
<feature type="helix" evidence="30">
    <location>
        <begin position="267"/>
        <end position="282"/>
    </location>
</feature>
<feature type="helix" evidence="30">
    <location>
        <begin position="286"/>
        <end position="300"/>
    </location>
</feature>
<feature type="helix" evidence="30">
    <location>
        <begin position="303"/>
        <end position="319"/>
    </location>
</feature>
<feature type="helix" evidence="30">
    <location>
        <begin position="336"/>
        <end position="349"/>
    </location>
</feature>
<feature type="helix" evidence="30">
    <location>
        <begin position="354"/>
        <end position="366"/>
    </location>
</feature>
<feature type="helix" evidence="30">
    <location>
        <begin position="369"/>
        <end position="383"/>
    </location>
</feature>
<feature type="strand" evidence="30">
    <location>
        <begin position="390"/>
        <end position="393"/>
    </location>
</feature>
<feature type="helix" evidence="30">
    <location>
        <begin position="396"/>
        <end position="398"/>
    </location>
</feature>
<feature type="turn" evidence="30">
    <location>
        <begin position="399"/>
        <end position="401"/>
    </location>
</feature>
<feature type="helix" evidence="30">
    <location>
        <begin position="404"/>
        <end position="415"/>
    </location>
</feature>
<feature type="turn" evidence="30">
    <location>
        <begin position="416"/>
        <end position="418"/>
    </location>
</feature>
<feature type="strand" evidence="30">
    <location>
        <begin position="420"/>
        <end position="422"/>
    </location>
</feature>
<feature type="turn" evidence="30">
    <location>
        <begin position="423"/>
        <end position="426"/>
    </location>
</feature>
<feature type="strand" evidence="30">
    <location>
        <begin position="427"/>
        <end position="430"/>
    </location>
</feature>
<feature type="helix" evidence="30">
    <location>
        <begin position="432"/>
        <end position="434"/>
    </location>
</feature>
<feature type="helix" evidence="30">
    <location>
        <begin position="435"/>
        <end position="452"/>
    </location>
</feature>
<name>GSDA3_MOUSE</name>
<protein>
    <recommendedName>
        <fullName evidence="24">Gasdermin-A3</fullName>
    </recommendedName>
    <alternativeName>
        <fullName evidence="22">Gasdermin-3</fullName>
    </alternativeName>
    <component>
        <recommendedName>
            <fullName evidence="24">Gasdermin-A3, N-terminal</fullName>
            <shortName evidence="24">GSDMA3-NT</shortName>
        </recommendedName>
    </component>
    <component>
        <recommendedName>
            <fullName evidence="24">Gasdermin-A3, C-terminal</fullName>
            <shortName evidence="24">GSDMA3-CT</shortName>
        </recommendedName>
    </component>
</protein>
<gene>
    <name evidence="23 28" type="primary">Gsdma3</name>
    <name evidence="22 28" type="synonym">Gsdm3</name>
</gene>
<dbReference type="EMBL" id="AY679090">
    <property type="protein sequence ID" value="AAU95732.1"/>
    <property type="molecule type" value="mRNA"/>
</dbReference>
<dbReference type="EMBL" id="AL591125">
    <property type="protein sequence ID" value="CAM24379.1"/>
    <property type="status" value="ALT_SEQ"/>
    <property type="molecule type" value="Genomic_DNA"/>
</dbReference>
<dbReference type="CCDS" id="CCDS25356.1"/>
<dbReference type="RefSeq" id="NP_001007462.1">
    <property type="nucleotide sequence ID" value="NM_001007461.2"/>
</dbReference>
<dbReference type="RefSeq" id="XP_006533737.1">
    <property type="nucleotide sequence ID" value="XM_006533674.2"/>
</dbReference>
<dbReference type="PDB" id="5B5R">
    <property type="method" value="X-ray"/>
    <property type="resolution" value="1.90 A"/>
    <property type="chains" value="A=1-464"/>
</dbReference>
<dbReference type="PDB" id="6CB8">
    <property type="method" value="EM"/>
    <property type="resolution" value="3.80 A"/>
    <property type="chains" value="A=1-262"/>
</dbReference>
<dbReference type="PDBsum" id="5B5R"/>
<dbReference type="PDBsum" id="6CB8"/>
<dbReference type="EMDB" id="EMD-7449"/>
<dbReference type="EMDB" id="EMD-7450"/>
<dbReference type="EMDB" id="EMD-7451"/>
<dbReference type="SMR" id="Q5Y4Y6"/>
<dbReference type="FunCoup" id="Q5Y4Y6">
    <property type="interactions" value="10"/>
</dbReference>
<dbReference type="STRING" id="10090.ENSMUSP00000073022"/>
<dbReference type="iPTMnet" id="Q5Y4Y6"/>
<dbReference type="PhosphoSitePlus" id="Q5Y4Y6"/>
<dbReference type="PaxDb" id="10090-ENSMUSP00000073022"/>
<dbReference type="PeptideAtlas" id="Q5Y4Y6"/>
<dbReference type="ProteomicsDB" id="271445"/>
<dbReference type="DNASU" id="450219"/>
<dbReference type="Ensembl" id="ENSMUST00000073295.3">
    <property type="protein sequence ID" value="ENSMUSP00000073022.3"/>
    <property type="gene ID" value="ENSMUSG00000064224.11"/>
</dbReference>
<dbReference type="GeneID" id="450219"/>
<dbReference type="KEGG" id="mmu:450219"/>
<dbReference type="UCSC" id="uc007lgs.1">
    <property type="organism name" value="mouse"/>
</dbReference>
<dbReference type="AGR" id="MGI:3044668"/>
<dbReference type="CTD" id="450219"/>
<dbReference type="MGI" id="MGI:3044668">
    <property type="gene designation" value="Gsdma3"/>
</dbReference>
<dbReference type="VEuPathDB" id="HostDB:ENSMUSG00000064224"/>
<dbReference type="eggNOG" id="ENOG502S0IQ">
    <property type="taxonomic scope" value="Eukaryota"/>
</dbReference>
<dbReference type="GeneTree" id="ENSGT00950000183140"/>
<dbReference type="InParanoid" id="Q5Y4Y6"/>
<dbReference type="OMA" id="RKIDRGH"/>
<dbReference type="OrthoDB" id="9944616at2759"/>
<dbReference type="PhylomeDB" id="Q5Y4Y6"/>
<dbReference type="TreeFam" id="TF331886"/>
<dbReference type="BioGRID-ORCS" id="450219">
    <property type="hits" value="0 hits in 80 CRISPR screens"/>
</dbReference>
<dbReference type="PRO" id="PR:Q5Y4Y6"/>
<dbReference type="Proteomes" id="UP000000589">
    <property type="component" value="Chromosome 11"/>
</dbReference>
<dbReference type="RNAct" id="Q5Y4Y6">
    <property type="molecule type" value="protein"/>
</dbReference>
<dbReference type="Bgee" id="ENSMUSG00000064224">
    <property type="expression patterns" value="Expressed in stomach glandular region mucosa and 23 other cell types or tissues"/>
</dbReference>
<dbReference type="ExpressionAtlas" id="Q5Y4Y6">
    <property type="expression patterns" value="baseline and differential"/>
</dbReference>
<dbReference type="GO" id="GO:0005829">
    <property type="term" value="C:cytosol"/>
    <property type="evidence" value="ECO:0007669"/>
    <property type="project" value="UniProtKB-SubCell"/>
</dbReference>
<dbReference type="GO" id="GO:0031966">
    <property type="term" value="C:mitochondrial membrane"/>
    <property type="evidence" value="ECO:0007669"/>
    <property type="project" value="UniProtKB-SubCell"/>
</dbReference>
<dbReference type="GO" id="GO:0005634">
    <property type="term" value="C:nucleus"/>
    <property type="evidence" value="ECO:0000314"/>
    <property type="project" value="MGI"/>
</dbReference>
<dbReference type="GO" id="GO:0005886">
    <property type="term" value="C:plasma membrane"/>
    <property type="evidence" value="ECO:0007669"/>
    <property type="project" value="UniProtKB-SubCell"/>
</dbReference>
<dbReference type="GO" id="GO:0022829">
    <property type="term" value="F:wide pore channel activity"/>
    <property type="evidence" value="ECO:0000314"/>
    <property type="project" value="UniProtKB"/>
</dbReference>
<dbReference type="GO" id="GO:0036331">
    <property type="term" value="P:avascular cornea development in camera-type eye"/>
    <property type="evidence" value="ECO:0000315"/>
    <property type="project" value="MGI"/>
</dbReference>
<dbReference type="GO" id="GO:0097191">
    <property type="term" value="P:extrinsic apoptotic signaling pathway"/>
    <property type="evidence" value="ECO:0000314"/>
    <property type="project" value="MGI"/>
</dbReference>
<dbReference type="GO" id="GO:0042633">
    <property type="term" value="P:hair cycle"/>
    <property type="evidence" value="ECO:0000315"/>
    <property type="project" value="MGI"/>
</dbReference>
<dbReference type="GO" id="GO:0001942">
    <property type="term" value="P:hair follicle development"/>
    <property type="evidence" value="ECO:0000315"/>
    <property type="project" value="UniProtKB"/>
</dbReference>
<dbReference type="GO" id="GO:0031069">
    <property type="term" value="P:hair follicle morphogenesis"/>
    <property type="evidence" value="ECO:0000315"/>
    <property type="project" value="MGI"/>
</dbReference>
<dbReference type="GO" id="GO:0030879">
    <property type="term" value="P:mammary gland development"/>
    <property type="evidence" value="ECO:0000315"/>
    <property type="project" value="UniProtKB"/>
</dbReference>
<dbReference type="GO" id="GO:0090090">
    <property type="term" value="P:negative regulation of canonical Wnt signaling pathway"/>
    <property type="evidence" value="ECO:0000314"/>
    <property type="project" value="MGI"/>
</dbReference>
<dbReference type="GO" id="GO:0051886">
    <property type="term" value="P:negative regulation of timing of anagen"/>
    <property type="evidence" value="ECO:0000314"/>
    <property type="project" value="MGI"/>
</dbReference>
<dbReference type="GO" id="GO:0043065">
    <property type="term" value="P:positive regulation of apoptotic process"/>
    <property type="evidence" value="ECO:0000315"/>
    <property type="project" value="MGI"/>
</dbReference>
<dbReference type="GO" id="GO:2001238">
    <property type="term" value="P:positive regulation of extrinsic apoptotic signaling pathway"/>
    <property type="evidence" value="ECO:0000314"/>
    <property type="project" value="MGI"/>
</dbReference>
<dbReference type="GO" id="GO:0032731">
    <property type="term" value="P:positive regulation of interleukin-1 beta production"/>
    <property type="evidence" value="ECO:0000314"/>
    <property type="project" value="UniProtKB"/>
</dbReference>
<dbReference type="GO" id="GO:0001949">
    <property type="term" value="P:sebaceous gland cell differentiation"/>
    <property type="evidence" value="ECO:0000315"/>
    <property type="project" value="MGI"/>
</dbReference>
<dbReference type="GO" id="GO:0043588">
    <property type="term" value="P:skin development"/>
    <property type="evidence" value="ECO:0000315"/>
    <property type="project" value="MGI"/>
</dbReference>
<dbReference type="GO" id="GO:0035019">
    <property type="term" value="P:somatic stem cell population maintenance"/>
    <property type="evidence" value="ECO:0000315"/>
    <property type="project" value="MGI"/>
</dbReference>
<dbReference type="InterPro" id="IPR007677">
    <property type="entry name" value="Gasdermin"/>
</dbReference>
<dbReference type="InterPro" id="IPR040460">
    <property type="entry name" value="Gasdermin_pore"/>
</dbReference>
<dbReference type="InterPro" id="IPR041263">
    <property type="entry name" value="Gasdermin_PUB"/>
</dbReference>
<dbReference type="PANTHER" id="PTHR16399">
    <property type="entry name" value="GASDERMIN"/>
    <property type="match status" value="1"/>
</dbReference>
<dbReference type="PANTHER" id="PTHR16399:SF18">
    <property type="entry name" value="GASDERMIN-A"/>
    <property type="match status" value="1"/>
</dbReference>
<dbReference type="Pfam" id="PF04598">
    <property type="entry name" value="Gasdermin"/>
    <property type="match status" value="1"/>
</dbReference>
<dbReference type="Pfam" id="PF17708">
    <property type="entry name" value="Gasdermin_C"/>
    <property type="match status" value="1"/>
</dbReference>
<organism>
    <name type="scientific">Mus musculus</name>
    <name type="common">Mouse</name>
    <dbReference type="NCBI Taxonomy" id="10090"/>
    <lineage>
        <taxon>Eukaryota</taxon>
        <taxon>Metazoa</taxon>
        <taxon>Chordata</taxon>
        <taxon>Craniata</taxon>
        <taxon>Vertebrata</taxon>
        <taxon>Euteleostomi</taxon>
        <taxon>Mammalia</taxon>
        <taxon>Eutheria</taxon>
        <taxon>Euarchontoglires</taxon>
        <taxon>Glires</taxon>
        <taxon>Rodentia</taxon>
        <taxon>Myomorpha</taxon>
        <taxon>Muroidea</taxon>
        <taxon>Muridae</taxon>
        <taxon>Murinae</taxon>
        <taxon>Mus</taxon>
        <taxon>Mus</taxon>
    </lineage>
</organism>
<evidence type="ECO:0000250" key="1">
    <source>
        <dbReference type="UniProtKB" id="P57764"/>
    </source>
</evidence>
<evidence type="ECO:0000250" key="2">
    <source>
        <dbReference type="UniProtKB" id="Q96QA5"/>
    </source>
</evidence>
<evidence type="ECO:0000250" key="3">
    <source>
        <dbReference type="UniProtKB" id="Q9EST1"/>
    </source>
</evidence>
<evidence type="ECO:0000255" key="4"/>
<evidence type="ECO:0000269" key="5">
    <source>
    </source>
</evidence>
<evidence type="ECO:0000269" key="6">
    <source>
    </source>
</evidence>
<evidence type="ECO:0000269" key="7">
    <source>
    </source>
</evidence>
<evidence type="ECO:0000269" key="8">
    <source>
    </source>
</evidence>
<evidence type="ECO:0000269" key="9">
    <source>
    </source>
</evidence>
<evidence type="ECO:0000269" key="10">
    <source>
    </source>
</evidence>
<evidence type="ECO:0000269" key="11">
    <source>
    </source>
</evidence>
<evidence type="ECO:0000269" key="12">
    <source>
    </source>
</evidence>
<evidence type="ECO:0000269" key="13">
    <source>
    </source>
</evidence>
<evidence type="ECO:0000269" key="14">
    <source>
    </source>
</evidence>
<evidence type="ECO:0000269" key="15">
    <source>
    </source>
</evidence>
<evidence type="ECO:0000269" key="16">
    <source>
    </source>
</evidence>
<evidence type="ECO:0000269" key="17">
    <source>
    </source>
</evidence>
<evidence type="ECO:0000269" key="18">
    <source>
    </source>
</evidence>
<evidence type="ECO:0000269" key="19">
    <source>
    </source>
</evidence>
<evidence type="ECO:0000269" key="20">
    <source>
    </source>
</evidence>
<evidence type="ECO:0000269" key="21">
    <source>
    </source>
</evidence>
<evidence type="ECO:0000303" key="22">
    <source>
    </source>
</evidence>
<evidence type="ECO:0000303" key="23">
    <source>
    </source>
</evidence>
<evidence type="ECO:0000305" key="24"/>
<evidence type="ECO:0000305" key="25">
    <source>
    </source>
</evidence>
<evidence type="ECO:0000305" key="26">
    <source>
    </source>
</evidence>
<evidence type="ECO:0000312" key="27">
    <source>
        <dbReference type="EMBL" id="AAU95732.1"/>
    </source>
</evidence>
<evidence type="ECO:0000312" key="28">
    <source>
        <dbReference type="MGI" id="MGI:3044668"/>
    </source>
</evidence>
<evidence type="ECO:0007744" key="29">
    <source>
        <dbReference type="PDB" id="6CB8"/>
    </source>
</evidence>
<evidence type="ECO:0007829" key="30">
    <source>
        <dbReference type="PDB" id="5B5R"/>
    </source>
</evidence>
<sequence>MPVFEDVTRALVRELNPRGDLTPLDSLIDFKHFRPFCLVLRKRKSTLFWGARYVRTDYTLLDLLEPGSSPSDLTDSGNFSFKNMLDVQVQGLVEVPKTVKVKGTAGLSQSSTLEVQTLSVAPSALENLKKERKLSADHSFLNEMRYHEKNLYVVMEAVEAKQEVTVEQTGNANAIFSLPSLALLGLQGSLNNNKAVTIPKGCVLAYRVRLLRVFLFNLWDIPYICNDSMQTFPKIRRVPCSAFISPTQMISEEPEEEKLIGEMHEDFKTLKEEVQRETQEVEKLSPVGRSSLLTSLSHLLGKKKELQDLEQKLEGALDKGQKVTLEALPKDVLLSKDAMDAILYFLGALTELTEEQLKILVKSLEKKILPVQLKLVESTLEQNFLQDKEGVFPLQPDLLSSLGEEELTLTEALVGLSGLEVQRSGPQYAWDPDTRHNLCALYAGLSLLHLLSRKSNALTYCALS</sequence>
<proteinExistence type="evidence at protein level"/>